<dbReference type="EC" id="2.7.1.2" evidence="1"/>
<dbReference type="EMBL" id="AM286415">
    <property type="protein sequence ID" value="CAL11316.1"/>
    <property type="molecule type" value="Genomic_DNA"/>
</dbReference>
<dbReference type="RefSeq" id="WP_011815870.1">
    <property type="nucleotide sequence ID" value="NC_008800.1"/>
</dbReference>
<dbReference type="RefSeq" id="YP_001005548.1">
    <property type="nucleotide sequence ID" value="NC_008800.1"/>
</dbReference>
<dbReference type="SMR" id="A1JLD7"/>
<dbReference type="KEGG" id="yen:YE1225"/>
<dbReference type="PATRIC" id="fig|393305.7.peg.1329"/>
<dbReference type="eggNOG" id="COG0837">
    <property type="taxonomic scope" value="Bacteria"/>
</dbReference>
<dbReference type="HOGENOM" id="CLU_042582_1_0_6"/>
<dbReference type="OrthoDB" id="9800595at2"/>
<dbReference type="Proteomes" id="UP000000642">
    <property type="component" value="Chromosome"/>
</dbReference>
<dbReference type="GO" id="GO:0005829">
    <property type="term" value="C:cytosol"/>
    <property type="evidence" value="ECO:0007669"/>
    <property type="project" value="TreeGrafter"/>
</dbReference>
<dbReference type="GO" id="GO:0005524">
    <property type="term" value="F:ATP binding"/>
    <property type="evidence" value="ECO:0007669"/>
    <property type="project" value="UniProtKB-UniRule"/>
</dbReference>
<dbReference type="GO" id="GO:0005536">
    <property type="term" value="F:D-glucose binding"/>
    <property type="evidence" value="ECO:0007669"/>
    <property type="project" value="InterPro"/>
</dbReference>
<dbReference type="GO" id="GO:0004340">
    <property type="term" value="F:glucokinase activity"/>
    <property type="evidence" value="ECO:0007669"/>
    <property type="project" value="UniProtKB-UniRule"/>
</dbReference>
<dbReference type="GO" id="GO:0006096">
    <property type="term" value="P:glycolytic process"/>
    <property type="evidence" value="ECO:0007669"/>
    <property type="project" value="UniProtKB-UniRule"/>
</dbReference>
<dbReference type="CDD" id="cd24008">
    <property type="entry name" value="ASKHA_NBD_GLK"/>
    <property type="match status" value="1"/>
</dbReference>
<dbReference type="FunFam" id="3.30.420.40:FF:000045">
    <property type="entry name" value="Glucokinase"/>
    <property type="match status" value="1"/>
</dbReference>
<dbReference type="FunFam" id="3.40.367.20:FF:000002">
    <property type="entry name" value="Glucokinase"/>
    <property type="match status" value="1"/>
</dbReference>
<dbReference type="Gene3D" id="3.30.420.40">
    <property type="match status" value="1"/>
</dbReference>
<dbReference type="Gene3D" id="3.40.367.20">
    <property type="match status" value="1"/>
</dbReference>
<dbReference type="HAMAP" id="MF_00524">
    <property type="entry name" value="Glucokinase"/>
    <property type="match status" value="1"/>
</dbReference>
<dbReference type="InterPro" id="IPR043129">
    <property type="entry name" value="ATPase_NBD"/>
</dbReference>
<dbReference type="InterPro" id="IPR050201">
    <property type="entry name" value="Bacterial_glucokinase"/>
</dbReference>
<dbReference type="InterPro" id="IPR003836">
    <property type="entry name" value="Glucokinase"/>
</dbReference>
<dbReference type="NCBIfam" id="TIGR00749">
    <property type="entry name" value="glk"/>
    <property type="match status" value="1"/>
</dbReference>
<dbReference type="NCBIfam" id="NF001414">
    <property type="entry name" value="PRK00292.1-1"/>
    <property type="match status" value="1"/>
</dbReference>
<dbReference type="NCBIfam" id="NF001416">
    <property type="entry name" value="PRK00292.1-3"/>
    <property type="match status" value="1"/>
</dbReference>
<dbReference type="NCBIfam" id="NF009073">
    <property type="entry name" value="PRK12408.1"/>
    <property type="match status" value="1"/>
</dbReference>
<dbReference type="PANTHER" id="PTHR47690">
    <property type="entry name" value="GLUCOKINASE"/>
    <property type="match status" value="1"/>
</dbReference>
<dbReference type="PANTHER" id="PTHR47690:SF1">
    <property type="entry name" value="GLUCOKINASE"/>
    <property type="match status" value="1"/>
</dbReference>
<dbReference type="Pfam" id="PF02685">
    <property type="entry name" value="Glucokinase"/>
    <property type="match status" value="1"/>
</dbReference>
<dbReference type="SUPFAM" id="SSF53067">
    <property type="entry name" value="Actin-like ATPase domain"/>
    <property type="match status" value="1"/>
</dbReference>
<proteinExistence type="inferred from homology"/>
<reference key="1">
    <citation type="journal article" date="2006" name="PLoS Genet.">
        <title>The complete genome sequence and comparative genome analysis of the high pathogenicity Yersinia enterocolitica strain 8081.</title>
        <authorList>
            <person name="Thomson N.R."/>
            <person name="Howard S."/>
            <person name="Wren B.W."/>
            <person name="Holden M.T.G."/>
            <person name="Crossman L."/>
            <person name="Challis G.L."/>
            <person name="Churcher C."/>
            <person name="Mungall K."/>
            <person name="Brooks K."/>
            <person name="Chillingworth T."/>
            <person name="Feltwell T."/>
            <person name="Abdellah Z."/>
            <person name="Hauser H."/>
            <person name="Jagels K."/>
            <person name="Maddison M."/>
            <person name="Moule S."/>
            <person name="Sanders M."/>
            <person name="Whitehead S."/>
            <person name="Quail M.A."/>
            <person name="Dougan G."/>
            <person name="Parkhill J."/>
            <person name="Prentice M.B."/>
        </authorList>
    </citation>
    <scope>NUCLEOTIDE SEQUENCE [LARGE SCALE GENOMIC DNA]</scope>
    <source>
        <strain>NCTC 13174 / 8081</strain>
    </source>
</reference>
<evidence type="ECO:0000255" key="1">
    <source>
        <dbReference type="HAMAP-Rule" id="MF_00524"/>
    </source>
</evidence>
<feature type="chain" id="PRO_1000050978" description="Glucokinase">
    <location>
        <begin position="1"/>
        <end position="323"/>
    </location>
</feature>
<feature type="binding site" evidence="1">
    <location>
        <begin position="8"/>
        <end position="13"/>
    </location>
    <ligand>
        <name>ATP</name>
        <dbReference type="ChEBI" id="CHEBI:30616"/>
    </ligand>
</feature>
<protein>
    <recommendedName>
        <fullName evidence="1">Glucokinase</fullName>
        <ecNumber evidence="1">2.7.1.2</ecNumber>
    </recommendedName>
    <alternativeName>
        <fullName evidence="1">Glucose kinase</fullName>
    </alternativeName>
</protein>
<comment type="catalytic activity">
    <reaction evidence="1">
        <text>D-glucose + ATP = D-glucose 6-phosphate + ADP + H(+)</text>
        <dbReference type="Rhea" id="RHEA:17825"/>
        <dbReference type="ChEBI" id="CHEBI:4167"/>
        <dbReference type="ChEBI" id="CHEBI:15378"/>
        <dbReference type="ChEBI" id="CHEBI:30616"/>
        <dbReference type="ChEBI" id="CHEBI:61548"/>
        <dbReference type="ChEBI" id="CHEBI:456216"/>
        <dbReference type="EC" id="2.7.1.2"/>
    </reaction>
</comment>
<comment type="subcellular location">
    <subcellularLocation>
        <location evidence="1">Cytoplasm</location>
    </subcellularLocation>
</comment>
<comment type="similarity">
    <text evidence="1">Belongs to the bacterial glucokinase family.</text>
</comment>
<keyword id="KW-0067">ATP-binding</keyword>
<keyword id="KW-0963">Cytoplasm</keyword>
<keyword id="KW-0324">Glycolysis</keyword>
<keyword id="KW-0418">Kinase</keyword>
<keyword id="KW-0547">Nucleotide-binding</keyword>
<keyword id="KW-0808">Transferase</keyword>
<organism>
    <name type="scientific">Yersinia enterocolitica serotype O:8 / biotype 1B (strain NCTC 13174 / 8081)</name>
    <dbReference type="NCBI Taxonomy" id="393305"/>
    <lineage>
        <taxon>Bacteria</taxon>
        <taxon>Pseudomonadati</taxon>
        <taxon>Pseudomonadota</taxon>
        <taxon>Gammaproteobacteria</taxon>
        <taxon>Enterobacterales</taxon>
        <taxon>Yersiniaceae</taxon>
        <taxon>Yersinia</taxon>
    </lineage>
</organism>
<name>GLK_YERE8</name>
<accession>A1JLD7</accession>
<gene>
    <name evidence="1" type="primary">glk</name>
    <name type="ordered locus">YE1225</name>
</gene>
<sequence length="323" mass="34719">MTSYALVGDVGGTNARLALCAVATGEISQAKTYSGLDYDSLEAVIKQYLSEHKVTVEHACIAIACPITGDWVAMTNHTWAFSIAAMQQNLGLKHLEIINDFTAVSMAIPMLSEQDVLQFGGTSPQPGKPVAVYGAGTGLGVAHLVNVDSRWISLPGEGGHVDFAPNSEEEDRILAVLRQELGHVSAERVLSGPGLVNLYRAIVISDGRLPENLAPKDVTERALADSCTDCRRALSLFCVIMGRFGGNLALNLSTFGGVYIAGGIVPRFMEFFKASGFRGAFEDKGRFKDFLQDIPVYMITHQQPGLLGAGAYLRQKLGYTLHP</sequence>